<comment type="function">
    <text evidence="1">Together with its co-chaperonin GroES, plays an essential role in assisting protein folding. The GroEL-GroES system forms a nano-cage that allows encapsulation of the non-native substrate proteins and provides a physical environment optimized to promote and accelerate protein folding.</text>
</comment>
<comment type="catalytic activity">
    <reaction evidence="1">
        <text>ATP + H2O + a folded polypeptide = ADP + phosphate + an unfolded polypeptide.</text>
        <dbReference type="EC" id="5.6.1.7"/>
    </reaction>
</comment>
<comment type="subunit">
    <text evidence="1">Forms a cylinder of 14 subunits composed of two heptameric rings stacked back-to-back. Interacts with the co-chaperonin GroES.</text>
</comment>
<comment type="subcellular location">
    <subcellularLocation>
        <location evidence="1">Cytoplasm</location>
    </subcellularLocation>
</comment>
<comment type="similarity">
    <text evidence="1">Belongs to the chaperonin (HSP60) family.</text>
</comment>
<accession>Q4UMF2</accession>
<sequence>MAKLIKHGSEGREQVLKGVDILADAVKVTLGPKGRNVLIEQSFGSPKITKDGVTVAKSIELKDKIRNAGAQLLKSAATKAAEVAGDGTTTATVLARALAREGNKLVAAGYNPMDLKRGMDLAVNAVVEEIKKSSKKINSQEEIAQVGTISSNGDKEIGEKIAKAMEEVGKEGVITVEEAKNFSFDVEVVKGMMFDRGYLSPYFVTNSEKMVAELENPFILLFEKKLSNLQPMLPILEAVVQSQRPLLIIAEDVEGEALATLVVNRLRGGLKVAAVKAPGFGDRRKAMMEDIAILTKGELITEDLGMKLENVSIKSLGTAKRVTISKENTVIVDGNGDKKNIEDRVLQIKSQIAETTSDYDKEKLQERLAKLSGGVAVLKVGGATEVEVKERKDRVEDALAATRAAVEEGVVAGGGVTLLHASQTLRNLKVDNKDQQAGIEIVIEALKDPLKQIVENAGENGGVVVGKLLEHKDKNYGFNAQDMQYVDMIKAGIIDPAKVVRTALQDAASVASLIITTETLIVDEPSDKEDSIPPMRGGMGGMGGMDF</sequence>
<dbReference type="EC" id="5.6.1.7" evidence="1"/>
<dbReference type="EMBL" id="CP000053">
    <property type="protein sequence ID" value="AAY61260.1"/>
    <property type="molecule type" value="Genomic_DNA"/>
</dbReference>
<dbReference type="SMR" id="Q4UMF2"/>
<dbReference type="STRING" id="315456.RF_0409"/>
<dbReference type="KEGG" id="rfe:RF_0409"/>
<dbReference type="eggNOG" id="COG0459">
    <property type="taxonomic scope" value="Bacteria"/>
</dbReference>
<dbReference type="HOGENOM" id="CLU_016503_3_0_5"/>
<dbReference type="OrthoDB" id="9766614at2"/>
<dbReference type="Proteomes" id="UP000008548">
    <property type="component" value="Chromosome"/>
</dbReference>
<dbReference type="GO" id="GO:0005737">
    <property type="term" value="C:cytoplasm"/>
    <property type="evidence" value="ECO:0007669"/>
    <property type="project" value="UniProtKB-SubCell"/>
</dbReference>
<dbReference type="GO" id="GO:0005524">
    <property type="term" value="F:ATP binding"/>
    <property type="evidence" value="ECO:0007669"/>
    <property type="project" value="UniProtKB-UniRule"/>
</dbReference>
<dbReference type="GO" id="GO:0140662">
    <property type="term" value="F:ATP-dependent protein folding chaperone"/>
    <property type="evidence" value="ECO:0007669"/>
    <property type="project" value="InterPro"/>
</dbReference>
<dbReference type="GO" id="GO:0016853">
    <property type="term" value="F:isomerase activity"/>
    <property type="evidence" value="ECO:0007669"/>
    <property type="project" value="UniProtKB-KW"/>
</dbReference>
<dbReference type="GO" id="GO:0051082">
    <property type="term" value="F:unfolded protein binding"/>
    <property type="evidence" value="ECO:0007669"/>
    <property type="project" value="UniProtKB-UniRule"/>
</dbReference>
<dbReference type="GO" id="GO:0042026">
    <property type="term" value="P:protein refolding"/>
    <property type="evidence" value="ECO:0007669"/>
    <property type="project" value="UniProtKB-UniRule"/>
</dbReference>
<dbReference type="CDD" id="cd03344">
    <property type="entry name" value="GroEL"/>
    <property type="match status" value="1"/>
</dbReference>
<dbReference type="FunFam" id="3.50.7.10:FF:000001">
    <property type="entry name" value="60 kDa chaperonin"/>
    <property type="match status" value="1"/>
</dbReference>
<dbReference type="Gene3D" id="3.50.7.10">
    <property type="entry name" value="GroEL"/>
    <property type="match status" value="1"/>
</dbReference>
<dbReference type="Gene3D" id="1.10.560.10">
    <property type="entry name" value="GroEL-like equatorial domain"/>
    <property type="match status" value="1"/>
</dbReference>
<dbReference type="Gene3D" id="3.30.260.10">
    <property type="entry name" value="TCP-1-like chaperonin intermediate domain"/>
    <property type="match status" value="1"/>
</dbReference>
<dbReference type="HAMAP" id="MF_00600">
    <property type="entry name" value="CH60"/>
    <property type="match status" value="1"/>
</dbReference>
<dbReference type="InterPro" id="IPR018370">
    <property type="entry name" value="Chaperonin_Cpn60_CS"/>
</dbReference>
<dbReference type="InterPro" id="IPR001844">
    <property type="entry name" value="Cpn60/GroEL"/>
</dbReference>
<dbReference type="InterPro" id="IPR002423">
    <property type="entry name" value="Cpn60/GroEL/TCP-1"/>
</dbReference>
<dbReference type="InterPro" id="IPR027409">
    <property type="entry name" value="GroEL-like_apical_dom_sf"/>
</dbReference>
<dbReference type="InterPro" id="IPR027413">
    <property type="entry name" value="GROEL-like_equatorial_sf"/>
</dbReference>
<dbReference type="InterPro" id="IPR027410">
    <property type="entry name" value="TCP-1-like_intermed_sf"/>
</dbReference>
<dbReference type="NCBIfam" id="TIGR02348">
    <property type="entry name" value="GroEL"/>
    <property type="match status" value="1"/>
</dbReference>
<dbReference type="NCBIfam" id="NF000592">
    <property type="entry name" value="PRK00013.1"/>
    <property type="match status" value="1"/>
</dbReference>
<dbReference type="NCBIfam" id="NF009487">
    <property type="entry name" value="PRK12849.1"/>
    <property type="match status" value="1"/>
</dbReference>
<dbReference type="NCBIfam" id="NF009488">
    <property type="entry name" value="PRK12850.1"/>
    <property type="match status" value="1"/>
</dbReference>
<dbReference type="NCBIfam" id="NF009489">
    <property type="entry name" value="PRK12851.1"/>
    <property type="match status" value="1"/>
</dbReference>
<dbReference type="PANTHER" id="PTHR45633">
    <property type="entry name" value="60 KDA HEAT SHOCK PROTEIN, MITOCHONDRIAL"/>
    <property type="match status" value="1"/>
</dbReference>
<dbReference type="Pfam" id="PF00118">
    <property type="entry name" value="Cpn60_TCP1"/>
    <property type="match status" value="1"/>
</dbReference>
<dbReference type="PRINTS" id="PR00298">
    <property type="entry name" value="CHAPERONIN60"/>
</dbReference>
<dbReference type="SUPFAM" id="SSF52029">
    <property type="entry name" value="GroEL apical domain-like"/>
    <property type="match status" value="1"/>
</dbReference>
<dbReference type="SUPFAM" id="SSF48592">
    <property type="entry name" value="GroEL equatorial domain-like"/>
    <property type="match status" value="1"/>
</dbReference>
<dbReference type="SUPFAM" id="SSF54849">
    <property type="entry name" value="GroEL-intermediate domain like"/>
    <property type="match status" value="1"/>
</dbReference>
<dbReference type="PROSITE" id="PS00296">
    <property type="entry name" value="CHAPERONINS_CPN60"/>
    <property type="match status" value="1"/>
</dbReference>
<organism>
    <name type="scientific">Rickettsia felis (strain ATCC VR-1525 / URRWXCal2)</name>
    <name type="common">Rickettsia azadi</name>
    <dbReference type="NCBI Taxonomy" id="315456"/>
    <lineage>
        <taxon>Bacteria</taxon>
        <taxon>Pseudomonadati</taxon>
        <taxon>Pseudomonadota</taxon>
        <taxon>Alphaproteobacteria</taxon>
        <taxon>Rickettsiales</taxon>
        <taxon>Rickettsiaceae</taxon>
        <taxon>Rickettsieae</taxon>
        <taxon>Rickettsia</taxon>
        <taxon>spotted fever group</taxon>
    </lineage>
</organism>
<evidence type="ECO:0000255" key="1">
    <source>
        <dbReference type="HAMAP-Rule" id="MF_00600"/>
    </source>
</evidence>
<evidence type="ECO:0000256" key="2">
    <source>
        <dbReference type="SAM" id="MobiDB-lite"/>
    </source>
</evidence>
<protein>
    <recommendedName>
        <fullName evidence="1">Chaperonin GroEL</fullName>
        <ecNumber evidence="1">5.6.1.7</ecNumber>
    </recommendedName>
    <alternativeName>
        <fullName evidence="1">60 kDa chaperonin</fullName>
    </alternativeName>
    <alternativeName>
        <fullName evidence="1">Chaperonin-60</fullName>
        <shortName evidence="1">Cpn60</shortName>
    </alternativeName>
</protein>
<keyword id="KW-0067">ATP-binding</keyword>
<keyword id="KW-0143">Chaperone</keyword>
<keyword id="KW-0963">Cytoplasm</keyword>
<keyword id="KW-0413">Isomerase</keyword>
<keyword id="KW-0547">Nucleotide-binding</keyword>
<feature type="chain" id="PRO_0000256977" description="Chaperonin GroEL">
    <location>
        <begin position="1"/>
        <end position="547"/>
    </location>
</feature>
<feature type="region of interest" description="Disordered" evidence="2">
    <location>
        <begin position="525"/>
        <end position="547"/>
    </location>
</feature>
<feature type="compositionally biased region" description="Gly residues" evidence="2">
    <location>
        <begin position="537"/>
        <end position="547"/>
    </location>
</feature>
<feature type="binding site" evidence="1">
    <location>
        <begin position="29"/>
        <end position="32"/>
    </location>
    <ligand>
        <name>ATP</name>
        <dbReference type="ChEBI" id="CHEBI:30616"/>
    </ligand>
</feature>
<feature type="binding site" evidence="1">
    <location>
        <position position="50"/>
    </location>
    <ligand>
        <name>ATP</name>
        <dbReference type="ChEBI" id="CHEBI:30616"/>
    </ligand>
</feature>
<feature type="binding site" evidence="1">
    <location>
        <begin position="86"/>
        <end position="90"/>
    </location>
    <ligand>
        <name>ATP</name>
        <dbReference type="ChEBI" id="CHEBI:30616"/>
    </ligand>
</feature>
<feature type="binding site" evidence="1">
    <location>
        <position position="414"/>
    </location>
    <ligand>
        <name>ATP</name>
        <dbReference type="ChEBI" id="CHEBI:30616"/>
    </ligand>
</feature>
<feature type="binding site" evidence="1">
    <location>
        <position position="495"/>
    </location>
    <ligand>
        <name>ATP</name>
        <dbReference type="ChEBI" id="CHEBI:30616"/>
    </ligand>
</feature>
<proteinExistence type="inferred from homology"/>
<name>CH60_RICFE</name>
<reference key="1">
    <citation type="journal article" date="2005" name="PLoS Biol.">
        <title>The genome sequence of Rickettsia felis identifies the first putative conjugative plasmid in an obligate intracellular parasite.</title>
        <authorList>
            <person name="Ogata H."/>
            <person name="Renesto P."/>
            <person name="Audic S."/>
            <person name="Robert C."/>
            <person name="Blanc G."/>
            <person name="Fournier P.-E."/>
            <person name="Parinello H."/>
            <person name="Claverie J.-M."/>
            <person name="Raoult D."/>
        </authorList>
    </citation>
    <scope>NUCLEOTIDE SEQUENCE [LARGE SCALE GENOMIC DNA]</scope>
    <source>
        <strain>ATCC VR-1525 / URRWXCal2</strain>
    </source>
</reference>
<gene>
    <name evidence="1" type="primary">groEL</name>
    <name evidence="1" type="synonym">groL</name>
    <name type="ordered locus">RF_0409</name>
</gene>